<comment type="function">
    <text evidence="1">Catalyzes the conversion of dethiobiotin (DTB) to biotin by the insertion of a sulfur atom into dethiobiotin via a radical-based mechanism.</text>
</comment>
<comment type="catalytic activity">
    <reaction evidence="1">
        <text>(4R,5S)-dethiobiotin + (sulfur carrier)-SH + 2 reduced [2Fe-2S]-[ferredoxin] + 2 S-adenosyl-L-methionine = (sulfur carrier)-H + biotin + 2 5'-deoxyadenosine + 2 L-methionine + 2 oxidized [2Fe-2S]-[ferredoxin]</text>
        <dbReference type="Rhea" id="RHEA:22060"/>
        <dbReference type="Rhea" id="RHEA-COMP:10000"/>
        <dbReference type="Rhea" id="RHEA-COMP:10001"/>
        <dbReference type="Rhea" id="RHEA-COMP:14737"/>
        <dbReference type="Rhea" id="RHEA-COMP:14739"/>
        <dbReference type="ChEBI" id="CHEBI:17319"/>
        <dbReference type="ChEBI" id="CHEBI:29917"/>
        <dbReference type="ChEBI" id="CHEBI:33737"/>
        <dbReference type="ChEBI" id="CHEBI:33738"/>
        <dbReference type="ChEBI" id="CHEBI:57586"/>
        <dbReference type="ChEBI" id="CHEBI:57844"/>
        <dbReference type="ChEBI" id="CHEBI:59789"/>
        <dbReference type="ChEBI" id="CHEBI:64428"/>
        <dbReference type="ChEBI" id="CHEBI:149473"/>
        <dbReference type="EC" id="2.8.1.6"/>
    </reaction>
</comment>
<comment type="cofactor">
    <cofactor evidence="1">
        <name>[4Fe-4S] cluster</name>
        <dbReference type="ChEBI" id="CHEBI:49883"/>
    </cofactor>
    <text evidence="1">Binds 1 [4Fe-4S] cluster. The cluster is coordinated with 3 cysteines and an exchangeable S-adenosyl-L-methionine.</text>
</comment>
<comment type="cofactor">
    <cofactor evidence="1">
        <name>[2Fe-2S] cluster</name>
        <dbReference type="ChEBI" id="CHEBI:190135"/>
    </cofactor>
    <text evidence="1">Binds 1 [2Fe-2S] cluster. The cluster is coordinated with 3 cysteines and 1 arginine.</text>
</comment>
<comment type="pathway">
    <text evidence="1">Cofactor biosynthesis; biotin biosynthesis; biotin from 7,8-diaminononanoate: step 2/2.</text>
</comment>
<comment type="subunit">
    <text evidence="1">Homodimer.</text>
</comment>
<comment type="similarity">
    <text evidence="1">Belongs to the radical SAM superfamily. Biotin synthase family.</text>
</comment>
<reference key="1">
    <citation type="journal article" date="2008" name="BMC Genomics">
        <title>Genomics of an extreme psychrophile, Psychromonas ingrahamii.</title>
        <authorList>
            <person name="Riley M."/>
            <person name="Staley J.T."/>
            <person name="Danchin A."/>
            <person name="Wang T.Z."/>
            <person name="Brettin T.S."/>
            <person name="Hauser L.J."/>
            <person name="Land M.L."/>
            <person name="Thompson L.S."/>
        </authorList>
    </citation>
    <scope>NUCLEOTIDE SEQUENCE [LARGE SCALE GENOMIC DNA]</scope>
    <source>
        <strain>DSM 17664 / CCUG 51855 / 37</strain>
    </source>
</reference>
<feature type="chain" id="PRO_0000381570" description="Biotin synthase">
    <location>
        <begin position="1"/>
        <end position="351"/>
    </location>
</feature>
<feature type="domain" description="Radical SAM core" evidence="2">
    <location>
        <begin position="42"/>
        <end position="269"/>
    </location>
</feature>
<feature type="binding site" evidence="1">
    <location>
        <position position="57"/>
    </location>
    <ligand>
        <name>[4Fe-4S] cluster</name>
        <dbReference type="ChEBI" id="CHEBI:49883"/>
        <note>4Fe-4S-S-AdoMet</note>
    </ligand>
</feature>
<feature type="binding site" evidence="1">
    <location>
        <position position="61"/>
    </location>
    <ligand>
        <name>[4Fe-4S] cluster</name>
        <dbReference type="ChEBI" id="CHEBI:49883"/>
        <note>4Fe-4S-S-AdoMet</note>
    </ligand>
</feature>
<feature type="binding site" evidence="1">
    <location>
        <position position="64"/>
    </location>
    <ligand>
        <name>[4Fe-4S] cluster</name>
        <dbReference type="ChEBI" id="CHEBI:49883"/>
        <note>4Fe-4S-S-AdoMet</note>
    </ligand>
</feature>
<feature type="binding site" evidence="1">
    <location>
        <position position="101"/>
    </location>
    <ligand>
        <name>[2Fe-2S] cluster</name>
        <dbReference type="ChEBI" id="CHEBI:190135"/>
    </ligand>
</feature>
<feature type="binding site" evidence="1">
    <location>
        <position position="132"/>
    </location>
    <ligand>
        <name>[2Fe-2S] cluster</name>
        <dbReference type="ChEBI" id="CHEBI:190135"/>
    </ligand>
</feature>
<feature type="binding site" evidence="1">
    <location>
        <position position="192"/>
    </location>
    <ligand>
        <name>[2Fe-2S] cluster</name>
        <dbReference type="ChEBI" id="CHEBI:190135"/>
    </ligand>
</feature>
<feature type="binding site" evidence="1">
    <location>
        <position position="264"/>
    </location>
    <ligand>
        <name>[2Fe-2S] cluster</name>
        <dbReference type="ChEBI" id="CHEBI:190135"/>
    </ligand>
</feature>
<dbReference type="EC" id="2.8.1.6" evidence="1"/>
<dbReference type="EMBL" id="CP000510">
    <property type="protein sequence ID" value="ABM03696.1"/>
    <property type="molecule type" value="Genomic_DNA"/>
</dbReference>
<dbReference type="RefSeq" id="WP_011770256.1">
    <property type="nucleotide sequence ID" value="NC_008709.1"/>
</dbReference>
<dbReference type="SMR" id="A1SW31"/>
<dbReference type="STRING" id="357804.Ping_1924"/>
<dbReference type="KEGG" id="pin:Ping_1924"/>
<dbReference type="eggNOG" id="COG0502">
    <property type="taxonomic scope" value="Bacteria"/>
</dbReference>
<dbReference type="HOGENOM" id="CLU_033172_1_2_6"/>
<dbReference type="OrthoDB" id="9786826at2"/>
<dbReference type="UniPathway" id="UPA00078">
    <property type="reaction ID" value="UER00162"/>
</dbReference>
<dbReference type="Proteomes" id="UP000000639">
    <property type="component" value="Chromosome"/>
</dbReference>
<dbReference type="GO" id="GO:0051537">
    <property type="term" value="F:2 iron, 2 sulfur cluster binding"/>
    <property type="evidence" value="ECO:0007669"/>
    <property type="project" value="UniProtKB-KW"/>
</dbReference>
<dbReference type="GO" id="GO:0051539">
    <property type="term" value="F:4 iron, 4 sulfur cluster binding"/>
    <property type="evidence" value="ECO:0007669"/>
    <property type="project" value="UniProtKB-KW"/>
</dbReference>
<dbReference type="GO" id="GO:0004076">
    <property type="term" value="F:biotin synthase activity"/>
    <property type="evidence" value="ECO:0007669"/>
    <property type="project" value="UniProtKB-UniRule"/>
</dbReference>
<dbReference type="GO" id="GO:0005506">
    <property type="term" value="F:iron ion binding"/>
    <property type="evidence" value="ECO:0007669"/>
    <property type="project" value="UniProtKB-UniRule"/>
</dbReference>
<dbReference type="GO" id="GO:0009102">
    <property type="term" value="P:biotin biosynthetic process"/>
    <property type="evidence" value="ECO:0007669"/>
    <property type="project" value="UniProtKB-UniRule"/>
</dbReference>
<dbReference type="CDD" id="cd01335">
    <property type="entry name" value="Radical_SAM"/>
    <property type="match status" value="1"/>
</dbReference>
<dbReference type="FunFam" id="3.20.20.70:FF:000011">
    <property type="entry name" value="Biotin synthase"/>
    <property type="match status" value="1"/>
</dbReference>
<dbReference type="Gene3D" id="3.20.20.70">
    <property type="entry name" value="Aldolase class I"/>
    <property type="match status" value="1"/>
</dbReference>
<dbReference type="HAMAP" id="MF_01694">
    <property type="entry name" value="BioB"/>
    <property type="match status" value="1"/>
</dbReference>
<dbReference type="InterPro" id="IPR013785">
    <property type="entry name" value="Aldolase_TIM"/>
</dbReference>
<dbReference type="InterPro" id="IPR010722">
    <property type="entry name" value="BATS_dom"/>
</dbReference>
<dbReference type="InterPro" id="IPR002684">
    <property type="entry name" value="Biotin_synth/BioAB"/>
</dbReference>
<dbReference type="InterPro" id="IPR024177">
    <property type="entry name" value="Biotin_synthase"/>
</dbReference>
<dbReference type="InterPro" id="IPR006638">
    <property type="entry name" value="Elp3/MiaA/NifB-like_rSAM"/>
</dbReference>
<dbReference type="InterPro" id="IPR007197">
    <property type="entry name" value="rSAM"/>
</dbReference>
<dbReference type="NCBIfam" id="TIGR00433">
    <property type="entry name" value="bioB"/>
    <property type="match status" value="1"/>
</dbReference>
<dbReference type="PANTHER" id="PTHR22976">
    <property type="entry name" value="BIOTIN SYNTHASE"/>
    <property type="match status" value="1"/>
</dbReference>
<dbReference type="PANTHER" id="PTHR22976:SF2">
    <property type="entry name" value="BIOTIN SYNTHASE, MITOCHONDRIAL"/>
    <property type="match status" value="1"/>
</dbReference>
<dbReference type="Pfam" id="PF06968">
    <property type="entry name" value="BATS"/>
    <property type="match status" value="1"/>
</dbReference>
<dbReference type="Pfam" id="PF04055">
    <property type="entry name" value="Radical_SAM"/>
    <property type="match status" value="1"/>
</dbReference>
<dbReference type="PIRSF" id="PIRSF001619">
    <property type="entry name" value="Biotin_synth"/>
    <property type="match status" value="1"/>
</dbReference>
<dbReference type="SFLD" id="SFLDF00272">
    <property type="entry name" value="biotin_synthase"/>
    <property type="match status" value="1"/>
</dbReference>
<dbReference type="SFLD" id="SFLDG01278">
    <property type="entry name" value="biotin_synthase_like"/>
    <property type="match status" value="1"/>
</dbReference>
<dbReference type="SMART" id="SM00876">
    <property type="entry name" value="BATS"/>
    <property type="match status" value="1"/>
</dbReference>
<dbReference type="SMART" id="SM00729">
    <property type="entry name" value="Elp3"/>
    <property type="match status" value="1"/>
</dbReference>
<dbReference type="SUPFAM" id="SSF102114">
    <property type="entry name" value="Radical SAM enzymes"/>
    <property type="match status" value="1"/>
</dbReference>
<dbReference type="PROSITE" id="PS51918">
    <property type="entry name" value="RADICAL_SAM"/>
    <property type="match status" value="1"/>
</dbReference>
<protein>
    <recommendedName>
        <fullName evidence="1">Biotin synthase</fullName>
        <ecNumber evidence="1">2.8.1.6</ecNumber>
    </recommendedName>
</protein>
<organism>
    <name type="scientific">Psychromonas ingrahamii (strain DSM 17664 / CCUG 51855 / 37)</name>
    <dbReference type="NCBI Taxonomy" id="357804"/>
    <lineage>
        <taxon>Bacteria</taxon>
        <taxon>Pseudomonadati</taxon>
        <taxon>Pseudomonadota</taxon>
        <taxon>Gammaproteobacteria</taxon>
        <taxon>Alteromonadales</taxon>
        <taxon>Psychromonadaceae</taxon>
        <taxon>Psychromonas</taxon>
    </lineage>
</organism>
<proteinExistence type="inferred from homology"/>
<name>BIOB_PSYIN</name>
<gene>
    <name evidence="1" type="primary">bioB</name>
    <name type="ordered locus">Ping_1924</name>
</gene>
<accession>A1SW31</accession>
<keyword id="KW-0001">2Fe-2S</keyword>
<keyword id="KW-0004">4Fe-4S</keyword>
<keyword id="KW-0093">Biotin biosynthesis</keyword>
<keyword id="KW-0408">Iron</keyword>
<keyword id="KW-0411">Iron-sulfur</keyword>
<keyword id="KW-0479">Metal-binding</keyword>
<keyword id="KW-1185">Reference proteome</keyword>
<keyword id="KW-0949">S-adenosyl-L-methionine</keyword>
<keyword id="KW-0808">Transferase</keyword>
<sequence>MINNTEIRQNWTVAEVDQLFEMPFMDLVFQAQTTHRANFPLNEVQVSTLLSIKTGACPEDCKYCPQSARYNTGLAKEQLIEVAKVVKAAKEAKATGSTRFCMGAAWKNPKQRDMPYLLDMIKEVRALGLESCMTLGMLDNNQAEQLSNAGLDYYNHNLDTSPEYYDKIITTRTYQDRLDTLENVRNSGMKVCSGGIVGLGEAGSDRSGLLVQLANLPQQPESVPINKLVKVKGTPLENADDLDDFTFIKTIAIARLLMPKSHVRLSAGRDDMNEQTQALCFMAGANSIFYGCKLLTTANPDENSDTRLFEKLGINKEAINFSPSEAEKKVDAAIVRFNEKDELFFDATSKA</sequence>
<evidence type="ECO:0000255" key="1">
    <source>
        <dbReference type="HAMAP-Rule" id="MF_01694"/>
    </source>
</evidence>
<evidence type="ECO:0000255" key="2">
    <source>
        <dbReference type="PROSITE-ProRule" id="PRU01266"/>
    </source>
</evidence>